<feature type="chain" id="PRO_0000077699" description="Restriction inhibitor protein ral">
    <location>
        <begin position="1"/>
        <end position="66"/>
    </location>
</feature>
<comment type="function">
    <text evidence="1">Ral interferes with the cleavage of DNA by E.coli EcoK restriction-modification system, by modifying the activity of the host methylase. This modulation allows incoming, unmodified phages to escape the host's restriction system.</text>
</comment>
<comment type="similarity">
    <text evidence="2">Belongs to the lambda phage ral family.</text>
</comment>
<accession>P03703</accession>
<dbReference type="EMBL" id="V00638">
    <property type="protein sequence ID" value="CAA23981.1"/>
    <property type="molecule type" value="Genomic_DNA"/>
</dbReference>
<dbReference type="EMBL" id="J02459">
    <property type="protein sequence ID" value="AAA96575.1"/>
    <property type="molecule type" value="Genomic_DNA"/>
</dbReference>
<dbReference type="PIR" id="G94164">
    <property type="entry name" value="QABPL"/>
</dbReference>
<dbReference type="RefSeq" id="NP_040622.1">
    <property type="nucleotide sequence ID" value="NC_001416.1"/>
</dbReference>
<dbReference type="GeneID" id="2703473"/>
<dbReference type="KEGG" id="vg:2703473"/>
<dbReference type="Proteomes" id="UP000001711">
    <property type="component" value="Genome"/>
</dbReference>
<dbReference type="GO" id="GO:0099018">
    <property type="term" value="P:symbiont-mediated evasion of host restriction-modification system"/>
    <property type="evidence" value="ECO:0007669"/>
    <property type="project" value="UniProtKB-KW"/>
</dbReference>
<dbReference type="GO" id="GO:0052170">
    <property type="term" value="P:symbiont-mediated suppression of host innate immune response"/>
    <property type="evidence" value="ECO:0007669"/>
    <property type="project" value="UniProtKB-KW"/>
</dbReference>
<dbReference type="InterPro" id="IPR022759">
    <property type="entry name" value="Antirestriction_protein_Ral"/>
</dbReference>
<dbReference type="Pfam" id="PF11058">
    <property type="entry name" value="Ral"/>
    <property type="match status" value="1"/>
</dbReference>
<protein>
    <recommendedName>
        <fullName>Restriction inhibitor protein ral</fullName>
    </recommendedName>
    <alternativeName>
        <fullName>Antirestriction protein</fullName>
    </alternativeName>
</protein>
<organism>
    <name type="scientific">Escherichia phage lambda</name>
    <name type="common">Bacteriophage lambda</name>
    <dbReference type="NCBI Taxonomy" id="2681611"/>
    <lineage>
        <taxon>Viruses</taxon>
        <taxon>Duplodnaviria</taxon>
        <taxon>Heunggongvirae</taxon>
        <taxon>Uroviricota</taxon>
        <taxon>Caudoviricetes</taxon>
        <taxon>Lambdavirus</taxon>
        <taxon>Lambdavirus lambda</taxon>
    </lineage>
</organism>
<evidence type="ECO:0000269" key="1">
    <source>
    </source>
</evidence>
<evidence type="ECO:0000305" key="2"/>
<keyword id="KW-0945">Host-virus interaction</keyword>
<keyword id="KW-1090">Inhibition of host innate immune response by virus</keyword>
<keyword id="KW-1185">Reference proteome</keyword>
<keyword id="KW-1258">Restriction-modification system evasion by virus</keyword>
<keyword id="KW-0899">Viral immunoevasion</keyword>
<name>RAL_LAMBD</name>
<organismHost>
    <name type="scientific">Escherichia coli</name>
    <dbReference type="NCBI Taxonomy" id="562"/>
</organismHost>
<sequence>MTTTIDKNQWCGQFKRCNGCKLQSECMVKPEEMFPVMEDGKYVDKWAIRTTAMIARELGKQNNKAA</sequence>
<proteinExistence type="inferred from homology"/>
<gene>
    <name type="primary">ral</name>
</gene>
<reference key="1">
    <citation type="journal article" date="1982" name="J. Mol. Biol.">
        <title>Nucleotide sequence of bacteriophage lambda DNA.</title>
        <authorList>
            <person name="Sanger F."/>
            <person name="Coulson A.R."/>
            <person name="Hong G.F."/>
            <person name="Hill D.F."/>
            <person name="Petersen G.B."/>
        </authorList>
    </citation>
    <scope>NUCLEOTIDE SEQUENCE [LARGE SCALE GENOMIC DNA]</scope>
</reference>
<reference key="2">
    <citation type="journal article" date="1981" name="Nucleic Acids Res.">
        <title>The DNA sequence of the phage lambda genome between PL and the gene bet.</title>
        <authorList>
            <person name="Ineichen K."/>
            <person name="Shepherd J.C.W."/>
            <person name="Bickle T.A."/>
        </authorList>
    </citation>
    <scope>NUCLEOTIDE SEQUENCE [GENOMIC DNA]</scope>
</reference>
<reference key="3">
    <citation type="journal article" date="1986" name="J. Mol. Biol.">
        <title>Modification enhancement by the restriction alleviation protein (Ral) of bacteriophage lambda.</title>
        <authorList>
            <person name="Loenen W.A."/>
            <person name="Murray N.E."/>
        </authorList>
    </citation>
    <scope>FUNCTION</scope>
</reference>